<gene>
    <name type="primary">angT</name>
</gene>
<name>ANGT_VIBA7</name>
<dbReference type="EC" id="3.1.2.-"/>
<dbReference type="EMBL" id="M34504">
    <property type="protein sequence ID" value="AAA79861.1"/>
    <property type="molecule type" value="Genomic_DNA"/>
</dbReference>
<dbReference type="EMBL" id="AY312585">
    <property type="protein sequence ID" value="AAR12529.1"/>
    <property type="molecule type" value="Genomic_DNA"/>
</dbReference>
<dbReference type="PIR" id="JQ0417">
    <property type="entry name" value="JQ0417"/>
</dbReference>
<dbReference type="RefSeq" id="NP_943554.1">
    <property type="nucleotide sequence ID" value="NC_005250.1"/>
</dbReference>
<dbReference type="RefSeq" id="WP_011154640.1">
    <property type="nucleotide sequence ID" value="NC_005250.1"/>
</dbReference>
<dbReference type="SMR" id="Q6W4T2"/>
<dbReference type="ESTHER" id="viban-sast">
    <property type="family name" value="Thioesterase"/>
</dbReference>
<dbReference type="eggNOG" id="COG3208">
    <property type="taxonomic scope" value="Bacteria"/>
</dbReference>
<dbReference type="UniPathway" id="UPA00016"/>
<dbReference type="GO" id="GO:0016787">
    <property type="term" value="F:hydrolase activity"/>
    <property type="evidence" value="ECO:0007669"/>
    <property type="project" value="UniProtKB-KW"/>
</dbReference>
<dbReference type="GO" id="GO:0008610">
    <property type="term" value="P:lipid biosynthetic process"/>
    <property type="evidence" value="ECO:0007669"/>
    <property type="project" value="TreeGrafter"/>
</dbReference>
<dbReference type="Gene3D" id="3.40.50.1820">
    <property type="entry name" value="alpha/beta hydrolase"/>
    <property type="match status" value="1"/>
</dbReference>
<dbReference type="InterPro" id="IPR029058">
    <property type="entry name" value="AB_hydrolase_fold"/>
</dbReference>
<dbReference type="InterPro" id="IPR012223">
    <property type="entry name" value="TEII"/>
</dbReference>
<dbReference type="InterPro" id="IPR001031">
    <property type="entry name" value="Thioesterase"/>
</dbReference>
<dbReference type="PANTHER" id="PTHR11487:SF0">
    <property type="entry name" value="S-ACYL FATTY ACID SYNTHASE THIOESTERASE, MEDIUM CHAIN"/>
    <property type="match status" value="1"/>
</dbReference>
<dbReference type="PANTHER" id="PTHR11487">
    <property type="entry name" value="THIOESTERASE"/>
    <property type="match status" value="1"/>
</dbReference>
<dbReference type="Pfam" id="PF00975">
    <property type="entry name" value="Thioesterase"/>
    <property type="match status" value="1"/>
</dbReference>
<dbReference type="SUPFAM" id="SSF53474">
    <property type="entry name" value="alpha/beta-Hydrolases"/>
    <property type="match status" value="1"/>
</dbReference>
<proteinExistence type="inferred from homology"/>
<feature type="chain" id="PRO_0000417118" description="Probable anguibactin biosynthesis thioesterase AngT">
    <location>
        <begin position="1"/>
        <end position="252"/>
    </location>
</feature>
<feature type="active site" evidence="1">
    <location>
        <position position="92"/>
    </location>
</feature>
<feature type="active site" evidence="1">
    <location>
        <position position="229"/>
    </location>
</feature>
<geneLocation type="plasmid">
    <name>pJM1</name>
</geneLocation>
<reference key="1">
    <citation type="journal article" date="1990" name="Gene">
        <title>A regulatory gene, angR, of the iron uptake system of Vibrio anguillarum: similarity with phage P22 cro and regulation by iron.</title>
        <authorList>
            <person name="Farrell D.H."/>
            <person name="Mikesell P."/>
            <person name="Actis L.A."/>
            <person name="Crosa J.H."/>
        </authorList>
    </citation>
    <scope>NUCLEOTIDE SEQUENCE [GENOMIC DNA]</scope>
    <source>
        <strain>ATCC 68554 / 775</strain>
    </source>
</reference>
<reference key="2">
    <citation type="journal article" date="2003" name="J. Bacteriol.">
        <title>Complete sequence of virulence plasmid pJM1 from the marine fish pathogen Vibrio anguillarum strain 775.</title>
        <authorList>
            <person name="Di Lorenzo M."/>
            <person name="Stork M."/>
            <person name="Tolmasky M.E."/>
            <person name="Actis L.A."/>
            <person name="Farrell D."/>
            <person name="Welch T.J."/>
            <person name="Crosa L.M."/>
            <person name="Wertheimer A.M."/>
            <person name="Chen Q."/>
            <person name="Salinas P."/>
            <person name="Waldbeser L."/>
            <person name="Crosa J.H."/>
        </authorList>
    </citation>
    <scope>NUCLEOTIDE SEQUENCE [LARGE SCALE GENOMIC DNA]</scope>
    <source>
        <strain>ATCC 68554 / 775</strain>
    </source>
</reference>
<reference key="3">
    <citation type="journal article" date="2011" name="Infect. Immun.">
        <title>Complete genome sequence of the marine fish pathogen Vibrio anguillarum harboring the pJM1 virulence plasmid and genomic comparison with other virulent strains of V. anguillarum and V. ordalii.</title>
        <authorList>
            <person name="Naka H."/>
            <person name="Dias G.M."/>
            <person name="Thompson C.C."/>
            <person name="Dubay C."/>
            <person name="Thompson F.L."/>
            <person name="Crosa J.H."/>
        </authorList>
    </citation>
    <scope>NUCLEOTIDE SEQUENCE [LARGE SCALE GENOMIC DNA]</scope>
    <source>
        <strain>ATCC 68554 / 775</strain>
    </source>
</reference>
<reference key="4">
    <citation type="journal article" date="1999" name="Infect. Immun.">
        <title>Characterization of the angR gene of Vibrio anguillarum: essential role in virulence.</title>
        <authorList>
            <person name="Wertheimer A.M."/>
            <person name="Verweij W."/>
            <person name="Chen Q."/>
            <person name="Crosa L.M."/>
            <person name="Nagasawa M."/>
            <person name="Tolmasky M.E."/>
            <person name="Actis L.A."/>
            <person name="Crosa J.H."/>
        </authorList>
    </citation>
    <scope>FUNCTION</scope>
    <scope>PATHWAY</scope>
    <scope>DISRUPTION PHENOTYPE</scope>
    <source>
        <strain>ATCC 68554 / 775</strain>
    </source>
</reference>
<keyword id="KW-0378">Hydrolase</keyword>
<keyword id="KW-0614">Plasmid</keyword>
<keyword id="KW-0843">Virulence</keyword>
<organism>
    <name type="scientific">Vibrio anguillarum (strain ATCC 68554 / 775)</name>
    <name type="common">Listonella anguillarum</name>
    <dbReference type="NCBI Taxonomy" id="882102"/>
    <lineage>
        <taxon>Bacteria</taxon>
        <taxon>Pseudomonadati</taxon>
        <taxon>Pseudomonadota</taxon>
        <taxon>Gammaproteobacteria</taxon>
        <taxon>Vibrionales</taxon>
        <taxon>Vibrionaceae</taxon>
        <taxon>Vibrio</taxon>
    </lineage>
</organism>
<accession>Q6W4T2</accession>
<accession>P19829</accession>
<protein>
    <recommendedName>
        <fullName>Probable anguibactin biosynthesis thioesterase AngT</fullName>
        <ecNumber>3.1.2.-</ecNumber>
    </recommendedName>
</protein>
<evidence type="ECO:0000250" key="1"/>
<evidence type="ECO:0000269" key="2">
    <source>
    </source>
</evidence>
<evidence type="ECO:0000305" key="3"/>
<comment type="function">
    <text evidence="2">Probable thioesterase. Involved in anguibactin production, but is not essential for virulence or iron transport gene expression.</text>
</comment>
<comment type="pathway">
    <text evidence="2">Siderophore biosynthesis; anguibactin biosynthesis.</text>
</comment>
<comment type="disruption phenotype">
    <text evidence="2">Deletion results in a decrease of anguibactin production and in a moderate attenuation of virulence.</text>
</comment>
<comment type="similarity">
    <text evidence="3">Belongs to the thioesterase family.</text>
</comment>
<sequence>MSPLIKLAASSRLHDATHYVLCPFAGGGSGAFRHWRTLSLENEVISVMLYPGREFRIDDPTVINIGTLAEEMIQALKTCNQRIEDTIIVGHSMGAQVAYEASKKLVNQGLFLKGLIISGCQAPHIKGRRLLGECDDKTFIHNLVEIGGCDPSLAKSPEWWPIFLPALRADFTATEQYIFTSLPNDKEGLPIPTLLISGDQDREANFSEIEEWKLWCNKVVDHLVVEGGHFYITEQPQMMLECIRALSTETTA</sequence>